<evidence type="ECO:0000305" key="1"/>
<name>NSP1B_ROTGI</name>
<comment type="similarity">
    <text evidence="1">Belongs to the rotavirus B NSP1-2 family.</text>
</comment>
<proteinExistence type="inferred from homology"/>
<organismHost>
    <name type="scientific">Homo sapiens</name>
    <name type="common">Human</name>
    <dbReference type="NCBI Taxonomy" id="9606"/>
</organismHost>
<organismHost>
    <name type="scientific">Rattus norvegicus</name>
    <name type="common">Rat</name>
    <dbReference type="NCBI Taxonomy" id="10116"/>
</organismHost>
<dbReference type="EMBL" id="U01164">
    <property type="protein sequence ID" value="AAA60453.1"/>
    <property type="molecule type" value="Genomic_RNA"/>
</dbReference>
<dbReference type="PIR" id="B49810">
    <property type="entry name" value="B49810"/>
</dbReference>
<organism>
    <name type="scientific">Rotavirus B (isolate RVB/Rat/United States/IDIR/1984/G1P[X])</name>
    <name type="common">RV-B</name>
    <name type="synonym">Rotavirus B (isolate infectious diarrhea of infant rats)</name>
    <dbReference type="NCBI Taxonomy" id="28877"/>
    <lineage>
        <taxon>Viruses</taxon>
        <taxon>Riboviria</taxon>
        <taxon>Orthornavirae</taxon>
        <taxon>Duplornaviricota</taxon>
        <taxon>Resentoviricetes</taxon>
        <taxon>Reovirales</taxon>
        <taxon>Sedoreoviridae</taxon>
        <taxon>Rotavirus</taxon>
        <taxon>Rotavirus B</taxon>
    </lineage>
</organism>
<accession>Q86517</accession>
<protein>
    <recommendedName>
        <fullName>Non-structural protein 1, peptide 2</fullName>
        <shortName>NSP1 peptide 2</shortName>
    </recommendedName>
    <alternativeName>
        <fullName>NSP1-2</fullName>
    </alternativeName>
</protein>
<reference key="1">
    <citation type="journal article" date="1994" name="Virology">
        <title>Expression and sequence analysis of gene 7 of the IDIR agent (group B rotavirus): similarity with NS53 of group A rotavirus.</title>
        <authorList>
            <person name="Eiden J.J."/>
        </authorList>
    </citation>
    <scope>NUCLEOTIDE SEQUENCE [GENOMIC RNA]</scope>
</reference>
<sequence length="320" mass="36220">MEFNQFLKEASGKVDLVPIYMSNPSCNPIHSSRKPGKVSALKYDNPLKECPEIPGDSVLISDVCPFIHEHFCGGIHIPYQHNMRPKGRITHVSADKIVWPCGLRSIKLDGKLVVGHMFVKCRCGNMYPTWISGESDFFFITCCANDTPAIKIGLANGDKCQNCLRLKRWYNPGPGFKSGINHYIAPFFCPVCTPIRDLVSNMTRFGAVSFDSPDYAEMKRNYDWKRSYPNNCESAFRSLNSPLIQTLPTVCDTVCASSGTTVTEMIASINRSWCTGFKIIPINRTRVLLKDDYRGRIIEFQDNNHLHNQIMAAMTEWKFL</sequence>
<feature type="chain" id="PRO_0000369857" description="Non-structural protein 1, peptide 2">
    <location>
        <begin position="1"/>
        <end position="320"/>
    </location>
</feature>